<dbReference type="EMBL" id="X73250">
    <property type="protein sequence ID" value="CAA51712.1"/>
    <property type="molecule type" value="Genomic_DNA"/>
</dbReference>
<dbReference type="PIR" id="S41126">
    <property type="entry name" value="S41126"/>
</dbReference>
<dbReference type="RefSeq" id="NP_001025534.1">
    <property type="nucleotide sequence ID" value="NM_001030363.1"/>
</dbReference>
<dbReference type="SMR" id="Q08856"/>
<dbReference type="STRING" id="9031.ENSGALP00000043455"/>
<dbReference type="GlyGen" id="Q08856">
    <property type="glycosylation" value="2 sites"/>
</dbReference>
<dbReference type="PaxDb" id="9031-ENSGALP00000043455"/>
<dbReference type="GeneID" id="395633"/>
<dbReference type="KEGG" id="gga:395633"/>
<dbReference type="CTD" id="4617"/>
<dbReference type="VEuPathDB" id="HostDB:geneid_395633"/>
<dbReference type="eggNOG" id="KOG3960">
    <property type="taxonomic scope" value="Eukaryota"/>
</dbReference>
<dbReference type="InParanoid" id="Q08856"/>
<dbReference type="OrthoDB" id="10049614at2759"/>
<dbReference type="PhylomeDB" id="Q08856"/>
<dbReference type="PRO" id="PR:Q08856"/>
<dbReference type="Proteomes" id="UP000000539">
    <property type="component" value="Unassembled WGS sequence"/>
</dbReference>
<dbReference type="GO" id="GO:0090575">
    <property type="term" value="C:RNA polymerase II transcription regulator complex"/>
    <property type="evidence" value="ECO:0000314"/>
    <property type="project" value="BHF-UCL"/>
</dbReference>
<dbReference type="GO" id="GO:0043425">
    <property type="term" value="F:bHLH transcription factor binding"/>
    <property type="evidence" value="ECO:0000353"/>
    <property type="project" value="BHF-UCL"/>
</dbReference>
<dbReference type="GO" id="GO:0000981">
    <property type="term" value="F:DNA-binding transcription factor activity, RNA polymerase II-specific"/>
    <property type="evidence" value="ECO:0000318"/>
    <property type="project" value="GO_Central"/>
</dbReference>
<dbReference type="GO" id="GO:0046983">
    <property type="term" value="F:protein dimerization activity"/>
    <property type="evidence" value="ECO:0007669"/>
    <property type="project" value="InterPro"/>
</dbReference>
<dbReference type="GO" id="GO:0000978">
    <property type="term" value="F:RNA polymerase II cis-regulatory region sequence-specific DNA binding"/>
    <property type="evidence" value="ECO:0000318"/>
    <property type="project" value="GO_Central"/>
</dbReference>
<dbReference type="GO" id="GO:0042693">
    <property type="term" value="P:muscle cell fate commitment"/>
    <property type="evidence" value="ECO:0000314"/>
    <property type="project" value="BHF-UCL"/>
</dbReference>
<dbReference type="GO" id="GO:0045663">
    <property type="term" value="P:positive regulation of myoblast differentiation"/>
    <property type="evidence" value="ECO:0000318"/>
    <property type="project" value="GO_Central"/>
</dbReference>
<dbReference type="GO" id="GO:0048743">
    <property type="term" value="P:positive regulation of skeletal muscle fiber development"/>
    <property type="evidence" value="ECO:0000318"/>
    <property type="project" value="GO_Central"/>
</dbReference>
<dbReference type="GO" id="GO:0006357">
    <property type="term" value="P:regulation of transcription by RNA polymerase II"/>
    <property type="evidence" value="ECO:0000318"/>
    <property type="project" value="GO_Central"/>
</dbReference>
<dbReference type="GO" id="GO:0035914">
    <property type="term" value="P:skeletal muscle cell differentiation"/>
    <property type="evidence" value="ECO:0000318"/>
    <property type="project" value="GO_Central"/>
</dbReference>
<dbReference type="CDD" id="cd18937">
    <property type="entry name" value="bHLH_TS_Myf5"/>
    <property type="match status" value="1"/>
</dbReference>
<dbReference type="FunFam" id="4.10.280.10:FF:000005">
    <property type="entry name" value="Myogenic factor"/>
    <property type="match status" value="1"/>
</dbReference>
<dbReference type="Gene3D" id="4.10.280.10">
    <property type="entry name" value="Helix-loop-helix DNA-binding domain"/>
    <property type="match status" value="1"/>
</dbReference>
<dbReference type="InterPro" id="IPR011598">
    <property type="entry name" value="bHLH_dom"/>
</dbReference>
<dbReference type="InterPro" id="IPR036638">
    <property type="entry name" value="HLH_DNA-bd_sf"/>
</dbReference>
<dbReference type="InterPro" id="IPR022032">
    <property type="entry name" value="Myf5"/>
</dbReference>
<dbReference type="InterPro" id="IPR002546">
    <property type="entry name" value="MyoD_N"/>
</dbReference>
<dbReference type="InterPro" id="IPR039704">
    <property type="entry name" value="Myogenic_factor"/>
</dbReference>
<dbReference type="PANTHER" id="PTHR11534">
    <property type="entry name" value="MYOGENIC FACTOR"/>
    <property type="match status" value="1"/>
</dbReference>
<dbReference type="PANTHER" id="PTHR11534:SF3">
    <property type="entry name" value="MYOGENIC FACTOR 5"/>
    <property type="match status" value="1"/>
</dbReference>
<dbReference type="Pfam" id="PF01586">
    <property type="entry name" value="Basic"/>
    <property type="match status" value="1"/>
</dbReference>
<dbReference type="Pfam" id="PF00010">
    <property type="entry name" value="HLH"/>
    <property type="match status" value="1"/>
</dbReference>
<dbReference type="Pfam" id="PF12232">
    <property type="entry name" value="Myf5"/>
    <property type="match status" value="1"/>
</dbReference>
<dbReference type="SMART" id="SM00520">
    <property type="entry name" value="BASIC"/>
    <property type="match status" value="1"/>
</dbReference>
<dbReference type="SMART" id="SM00353">
    <property type="entry name" value="HLH"/>
    <property type="match status" value="1"/>
</dbReference>
<dbReference type="SUPFAM" id="SSF47459">
    <property type="entry name" value="HLH, helix-loop-helix DNA-binding domain"/>
    <property type="match status" value="1"/>
</dbReference>
<dbReference type="PROSITE" id="PS50888">
    <property type="entry name" value="BHLH"/>
    <property type="match status" value="1"/>
</dbReference>
<evidence type="ECO:0000250" key="1"/>
<evidence type="ECO:0000255" key="2">
    <source>
        <dbReference type="PROSITE-ProRule" id="PRU00981"/>
    </source>
</evidence>
<evidence type="ECO:0000256" key="3">
    <source>
        <dbReference type="SAM" id="MobiDB-lite"/>
    </source>
</evidence>
<feature type="chain" id="PRO_0000127346" description="Myogenic factor 5">
    <location>
        <begin position="1"/>
        <end position="258"/>
    </location>
</feature>
<feature type="domain" description="bHLH" evidence="2">
    <location>
        <begin position="85"/>
        <end position="136"/>
    </location>
</feature>
<feature type="region of interest" description="Disordered" evidence="3">
    <location>
        <begin position="21"/>
        <end position="50"/>
    </location>
</feature>
<feature type="region of interest" description="Disordered" evidence="3">
    <location>
        <begin position="220"/>
        <end position="258"/>
    </location>
</feature>
<gene>
    <name type="primary">MYF5</name>
</gene>
<protein>
    <recommendedName>
        <fullName>Myogenic factor 5</fullName>
        <shortName>Myf-5</shortName>
    </recommendedName>
</protein>
<accession>Q08856</accession>
<proteinExistence type="inferred from homology"/>
<reference key="1">
    <citation type="journal article" date="1993" name="Nucleic Acids Res.">
        <title>Expression of myogenic factors in denervated chicken breast muscle: isolation of the chicken Myf5 gene.</title>
        <authorList>
            <person name="Saitoh O."/>
            <person name="Fujisawa-Sehara A."/>
            <person name="Nabeshima Y."/>
            <person name="Periasamy M."/>
        </authorList>
    </citation>
    <scope>NUCLEOTIDE SEQUENCE [GENOMIC DNA]</scope>
</reference>
<name>MYF5_CHICK</name>
<comment type="function">
    <text evidence="1">Acts as a transcriptional activator that promotes transcription of muscle-specific target genes and plays a role in muscle differentiation. Induces fibroblasts to differentiate into myoblasts. Probable sequence specific DNA-binding protein (By similarity).</text>
</comment>
<comment type="subunit">
    <text>Efficient DNA binding requires dimerization with another bHLH protein.</text>
</comment>
<comment type="subcellular location">
    <subcellularLocation>
        <location>Nucleus</location>
    </subcellularLocation>
</comment>
<sequence>MEVMDSCQFSPSELFYDSSCLSSPEGEFPEDFEPRELPPFGAPAPTEPACPEEEEHVRAPSGHHQAGHCLMWACKACKRKSTTMDRRKAATMRERRRLKKVNQAFETLKRCTTANPNQRLPKVEILRNAIRYIESLQELLREQVENYYHLPGQSCSEPTSPSSSCSDVMADSRSPVWPARGSSFEAGYCREMPHGYATEQSGALSSLDCLSSIVDRLSPAEEPGLPLRHAGSLSPGASIDSGPGTPGSPPPRRTYQAL</sequence>
<organism>
    <name type="scientific">Gallus gallus</name>
    <name type="common">Chicken</name>
    <dbReference type="NCBI Taxonomy" id="9031"/>
    <lineage>
        <taxon>Eukaryota</taxon>
        <taxon>Metazoa</taxon>
        <taxon>Chordata</taxon>
        <taxon>Craniata</taxon>
        <taxon>Vertebrata</taxon>
        <taxon>Euteleostomi</taxon>
        <taxon>Archelosauria</taxon>
        <taxon>Archosauria</taxon>
        <taxon>Dinosauria</taxon>
        <taxon>Saurischia</taxon>
        <taxon>Theropoda</taxon>
        <taxon>Coelurosauria</taxon>
        <taxon>Aves</taxon>
        <taxon>Neognathae</taxon>
        <taxon>Galloanserae</taxon>
        <taxon>Galliformes</taxon>
        <taxon>Phasianidae</taxon>
        <taxon>Phasianinae</taxon>
        <taxon>Gallus</taxon>
    </lineage>
</organism>
<keyword id="KW-0010">Activator</keyword>
<keyword id="KW-0217">Developmental protein</keyword>
<keyword id="KW-0221">Differentiation</keyword>
<keyword id="KW-0238">DNA-binding</keyword>
<keyword id="KW-0517">Myogenesis</keyword>
<keyword id="KW-0539">Nucleus</keyword>
<keyword id="KW-1185">Reference proteome</keyword>
<keyword id="KW-0804">Transcription</keyword>
<keyword id="KW-0805">Transcription regulation</keyword>